<reference key="1">
    <citation type="journal article" date="2002" name="Nucleic Acids Res.">
        <title>Genome sequence of Oceanobacillus iheyensis isolated from the Iheya Ridge and its unexpected adaptive capabilities to extreme environments.</title>
        <authorList>
            <person name="Takami H."/>
            <person name="Takaki Y."/>
            <person name="Uchiyama I."/>
        </authorList>
    </citation>
    <scope>NUCLEOTIDE SEQUENCE [LARGE SCALE GENOMIC DNA]</scope>
    <source>
        <strain>DSM 14371 / CIP 107618 / JCM 11309 / KCTC 3954 / HTE831</strain>
    </source>
</reference>
<evidence type="ECO:0000255" key="1">
    <source>
        <dbReference type="HAMAP-Rule" id="MF_00050"/>
    </source>
</evidence>
<keyword id="KW-0963">Cytoplasm</keyword>
<keyword id="KW-0251">Elongation factor</keyword>
<keyword id="KW-0648">Protein biosynthesis</keyword>
<keyword id="KW-1185">Reference proteome</keyword>
<protein>
    <recommendedName>
        <fullName evidence="1">Elongation factor Ts</fullName>
        <shortName evidence="1">EF-Ts</shortName>
    </recommendedName>
</protein>
<gene>
    <name evidence="1" type="primary">tsf</name>
    <name type="ordered locus">OB1587</name>
</gene>
<accession>Q8EQV2</accession>
<name>EFTS_OCEIH</name>
<feature type="chain" id="PRO_0000161165" description="Elongation factor Ts">
    <location>
        <begin position="1"/>
        <end position="294"/>
    </location>
</feature>
<feature type="region of interest" description="Involved in Mg(2+) ion dislocation from EF-Tu" evidence="1">
    <location>
        <begin position="79"/>
        <end position="82"/>
    </location>
</feature>
<comment type="function">
    <text evidence="1">Associates with the EF-Tu.GDP complex and induces the exchange of GDP to GTP. It remains bound to the aminoacyl-tRNA.EF-Tu.GTP complex up to the GTP hydrolysis stage on the ribosome.</text>
</comment>
<comment type="subcellular location">
    <subcellularLocation>
        <location evidence="1">Cytoplasm</location>
    </subcellularLocation>
</comment>
<comment type="similarity">
    <text evidence="1">Belongs to the EF-Ts family.</text>
</comment>
<dbReference type="EMBL" id="BA000028">
    <property type="protein sequence ID" value="BAC13543.1"/>
    <property type="molecule type" value="Genomic_DNA"/>
</dbReference>
<dbReference type="RefSeq" id="WP_011065987.1">
    <property type="nucleotide sequence ID" value="NC_004193.1"/>
</dbReference>
<dbReference type="SMR" id="Q8EQV2"/>
<dbReference type="STRING" id="221109.gene:10733827"/>
<dbReference type="KEGG" id="oih:OB1587"/>
<dbReference type="eggNOG" id="COG0264">
    <property type="taxonomic scope" value="Bacteria"/>
</dbReference>
<dbReference type="HOGENOM" id="CLU_047155_0_2_9"/>
<dbReference type="OrthoDB" id="9808348at2"/>
<dbReference type="PhylomeDB" id="Q8EQV2"/>
<dbReference type="Proteomes" id="UP000000822">
    <property type="component" value="Chromosome"/>
</dbReference>
<dbReference type="GO" id="GO:0005737">
    <property type="term" value="C:cytoplasm"/>
    <property type="evidence" value="ECO:0007669"/>
    <property type="project" value="UniProtKB-SubCell"/>
</dbReference>
<dbReference type="GO" id="GO:0003746">
    <property type="term" value="F:translation elongation factor activity"/>
    <property type="evidence" value="ECO:0007669"/>
    <property type="project" value="UniProtKB-UniRule"/>
</dbReference>
<dbReference type="CDD" id="cd14275">
    <property type="entry name" value="UBA_EF-Ts"/>
    <property type="match status" value="1"/>
</dbReference>
<dbReference type="FunFam" id="1.10.286.20:FF:000003">
    <property type="entry name" value="Elongation factor Ts"/>
    <property type="match status" value="1"/>
</dbReference>
<dbReference type="FunFam" id="1.10.8.10:FF:000001">
    <property type="entry name" value="Elongation factor Ts"/>
    <property type="match status" value="1"/>
</dbReference>
<dbReference type="Gene3D" id="1.10.286.20">
    <property type="match status" value="1"/>
</dbReference>
<dbReference type="Gene3D" id="1.10.8.10">
    <property type="entry name" value="DNA helicase RuvA subunit, C-terminal domain"/>
    <property type="match status" value="1"/>
</dbReference>
<dbReference type="Gene3D" id="3.30.479.20">
    <property type="entry name" value="Elongation factor Ts, dimerisation domain"/>
    <property type="match status" value="2"/>
</dbReference>
<dbReference type="HAMAP" id="MF_00050">
    <property type="entry name" value="EF_Ts"/>
    <property type="match status" value="1"/>
</dbReference>
<dbReference type="InterPro" id="IPR036402">
    <property type="entry name" value="EF-Ts_dimer_sf"/>
</dbReference>
<dbReference type="InterPro" id="IPR001816">
    <property type="entry name" value="Transl_elong_EFTs/EF1B"/>
</dbReference>
<dbReference type="InterPro" id="IPR014039">
    <property type="entry name" value="Transl_elong_EFTs/EF1B_dimer"/>
</dbReference>
<dbReference type="InterPro" id="IPR018101">
    <property type="entry name" value="Transl_elong_Ts_CS"/>
</dbReference>
<dbReference type="InterPro" id="IPR009060">
    <property type="entry name" value="UBA-like_sf"/>
</dbReference>
<dbReference type="NCBIfam" id="TIGR00116">
    <property type="entry name" value="tsf"/>
    <property type="match status" value="1"/>
</dbReference>
<dbReference type="PANTHER" id="PTHR11741">
    <property type="entry name" value="ELONGATION FACTOR TS"/>
    <property type="match status" value="1"/>
</dbReference>
<dbReference type="PANTHER" id="PTHR11741:SF0">
    <property type="entry name" value="ELONGATION FACTOR TS, MITOCHONDRIAL"/>
    <property type="match status" value="1"/>
</dbReference>
<dbReference type="Pfam" id="PF00889">
    <property type="entry name" value="EF_TS"/>
    <property type="match status" value="1"/>
</dbReference>
<dbReference type="SUPFAM" id="SSF54713">
    <property type="entry name" value="Elongation factor Ts (EF-Ts), dimerisation domain"/>
    <property type="match status" value="2"/>
</dbReference>
<dbReference type="SUPFAM" id="SSF46934">
    <property type="entry name" value="UBA-like"/>
    <property type="match status" value="1"/>
</dbReference>
<dbReference type="PROSITE" id="PS01126">
    <property type="entry name" value="EF_TS_1"/>
    <property type="match status" value="1"/>
</dbReference>
<dbReference type="PROSITE" id="PS01127">
    <property type="entry name" value="EF_TS_2"/>
    <property type="match status" value="1"/>
</dbReference>
<sequence length="294" mass="32659">MAITAQMVKELREKTGAGMMDCKKALQETNGDIEQAIDFLREKGMAKAAKKADRVAAEGLTHIEVEGNKAAIIEVNCETDFVTKNDQFKQLLSELGKHIVANEPATVEEALQQKLHGDGETVESVITNAVAKIGEKISLRRFEVLEKTDNDAFGAYLHMGGTIGVLSLLEGTTDEQVGKDIAMHVAAVNPRYVTRDEVAEEEVNREREVLKTQALNEGKPENIVEKMVEGRLGKFFEDIVLLEQSFVKDPDQKVKKYVADKGAAVKTFVRYEVGEGMEKREENFAEEVMSQIKK</sequence>
<organism>
    <name type="scientific">Oceanobacillus iheyensis (strain DSM 14371 / CIP 107618 / JCM 11309 / KCTC 3954 / HTE831)</name>
    <dbReference type="NCBI Taxonomy" id="221109"/>
    <lineage>
        <taxon>Bacteria</taxon>
        <taxon>Bacillati</taxon>
        <taxon>Bacillota</taxon>
        <taxon>Bacilli</taxon>
        <taxon>Bacillales</taxon>
        <taxon>Bacillaceae</taxon>
        <taxon>Oceanobacillus</taxon>
    </lineage>
</organism>
<proteinExistence type="inferred from homology"/>